<reference key="1">
    <citation type="journal article" date="2001" name="Nature">
        <title>Complete genome sequence of a multiple drug resistant Salmonella enterica serovar Typhi CT18.</title>
        <authorList>
            <person name="Parkhill J."/>
            <person name="Dougan G."/>
            <person name="James K.D."/>
            <person name="Thomson N.R."/>
            <person name="Pickard D."/>
            <person name="Wain J."/>
            <person name="Churcher C.M."/>
            <person name="Mungall K.L."/>
            <person name="Bentley S.D."/>
            <person name="Holden M.T.G."/>
            <person name="Sebaihia M."/>
            <person name="Baker S."/>
            <person name="Basham D."/>
            <person name="Brooks K."/>
            <person name="Chillingworth T."/>
            <person name="Connerton P."/>
            <person name="Cronin A."/>
            <person name="Davis P."/>
            <person name="Davies R.M."/>
            <person name="Dowd L."/>
            <person name="White N."/>
            <person name="Farrar J."/>
            <person name="Feltwell T."/>
            <person name="Hamlin N."/>
            <person name="Haque A."/>
            <person name="Hien T.T."/>
            <person name="Holroyd S."/>
            <person name="Jagels K."/>
            <person name="Krogh A."/>
            <person name="Larsen T.S."/>
            <person name="Leather S."/>
            <person name="Moule S."/>
            <person name="O'Gaora P."/>
            <person name="Parry C."/>
            <person name="Quail M.A."/>
            <person name="Rutherford K.M."/>
            <person name="Simmonds M."/>
            <person name="Skelton J."/>
            <person name="Stevens K."/>
            <person name="Whitehead S."/>
            <person name="Barrell B.G."/>
        </authorList>
    </citation>
    <scope>NUCLEOTIDE SEQUENCE [LARGE SCALE GENOMIC DNA]</scope>
    <source>
        <strain>CT18</strain>
    </source>
</reference>
<reference key="2">
    <citation type="journal article" date="2003" name="J. Bacteriol.">
        <title>Comparative genomics of Salmonella enterica serovar Typhi strains Ty2 and CT18.</title>
        <authorList>
            <person name="Deng W."/>
            <person name="Liou S.-R."/>
            <person name="Plunkett G. III"/>
            <person name="Mayhew G.F."/>
            <person name="Rose D.J."/>
            <person name="Burland V."/>
            <person name="Kodoyianni V."/>
            <person name="Schwartz D.C."/>
            <person name="Blattner F.R."/>
        </authorList>
    </citation>
    <scope>NUCLEOTIDE SEQUENCE [LARGE SCALE GENOMIC DNA]</scope>
    <source>
        <strain>ATCC 700931 / Ty2</strain>
    </source>
</reference>
<name>MSCL_SALTI</name>
<organism>
    <name type="scientific">Salmonella typhi</name>
    <dbReference type="NCBI Taxonomy" id="90370"/>
    <lineage>
        <taxon>Bacteria</taxon>
        <taxon>Pseudomonadati</taxon>
        <taxon>Pseudomonadota</taxon>
        <taxon>Gammaproteobacteria</taxon>
        <taxon>Enterobacterales</taxon>
        <taxon>Enterobacteriaceae</taxon>
        <taxon>Salmonella</taxon>
    </lineage>
</organism>
<keyword id="KW-0997">Cell inner membrane</keyword>
<keyword id="KW-1003">Cell membrane</keyword>
<keyword id="KW-0407">Ion channel</keyword>
<keyword id="KW-0406">Ion transport</keyword>
<keyword id="KW-0472">Membrane</keyword>
<keyword id="KW-0812">Transmembrane</keyword>
<keyword id="KW-1133">Transmembrane helix</keyword>
<keyword id="KW-0813">Transport</keyword>
<protein>
    <recommendedName>
        <fullName evidence="1">Large-conductance mechanosensitive channel</fullName>
    </recommendedName>
</protein>
<dbReference type="EMBL" id="AL513382">
    <property type="protein sequence ID" value="CAD09175.1"/>
    <property type="molecule type" value="Genomic_DNA"/>
</dbReference>
<dbReference type="EMBL" id="AE014613">
    <property type="protein sequence ID" value="AAO71561.1"/>
    <property type="molecule type" value="Genomic_DNA"/>
</dbReference>
<dbReference type="RefSeq" id="NP_458489.1">
    <property type="nucleotide sequence ID" value="NC_003198.1"/>
</dbReference>
<dbReference type="RefSeq" id="WP_000008119.1">
    <property type="nucleotide sequence ID" value="NZ_WSUR01000046.1"/>
</dbReference>
<dbReference type="SMR" id="P0A1X9"/>
<dbReference type="STRING" id="220341.gene:17588215"/>
<dbReference type="KEGG" id="stt:t4094"/>
<dbReference type="KEGG" id="sty:STY4387"/>
<dbReference type="PATRIC" id="fig|220341.7.peg.4483"/>
<dbReference type="eggNOG" id="COG1970">
    <property type="taxonomic scope" value="Bacteria"/>
</dbReference>
<dbReference type="HOGENOM" id="CLU_095787_0_0_6"/>
<dbReference type="OMA" id="FKTFAMR"/>
<dbReference type="OrthoDB" id="9810350at2"/>
<dbReference type="Proteomes" id="UP000000541">
    <property type="component" value="Chromosome"/>
</dbReference>
<dbReference type="Proteomes" id="UP000002670">
    <property type="component" value="Chromosome"/>
</dbReference>
<dbReference type="GO" id="GO:0005886">
    <property type="term" value="C:plasma membrane"/>
    <property type="evidence" value="ECO:0007669"/>
    <property type="project" value="UniProtKB-SubCell"/>
</dbReference>
<dbReference type="GO" id="GO:0008381">
    <property type="term" value="F:mechanosensitive monoatomic ion channel activity"/>
    <property type="evidence" value="ECO:0007669"/>
    <property type="project" value="UniProtKB-UniRule"/>
</dbReference>
<dbReference type="FunFam" id="1.10.1200.120:FF:000001">
    <property type="entry name" value="Large-conductance mechanosensitive channel"/>
    <property type="match status" value="1"/>
</dbReference>
<dbReference type="Gene3D" id="1.10.1200.120">
    <property type="entry name" value="Large-conductance mechanosensitive channel, MscL, domain 1"/>
    <property type="match status" value="1"/>
</dbReference>
<dbReference type="HAMAP" id="MF_00115">
    <property type="entry name" value="MscL"/>
    <property type="match status" value="1"/>
</dbReference>
<dbReference type="InterPro" id="IPR019823">
    <property type="entry name" value="Mechanosensitive_channel_CS"/>
</dbReference>
<dbReference type="InterPro" id="IPR001185">
    <property type="entry name" value="MS_channel"/>
</dbReference>
<dbReference type="InterPro" id="IPR037673">
    <property type="entry name" value="MSC/AndL"/>
</dbReference>
<dbReference type="InterPro" id="IPR036019">
    <property type="entry name" value="MscL_channel"/>
</dbReference>
<dbReference type="NCBIfam" id="TIGR00220">
    <property type="entry name" value="mscL"/>
    <property type="match status" value="1"/>
</dbReference>
<dbReference type="NCBIfam" id="NF001841">
    <property type="entry name" value="PRK00567.1-1"/>
    <property type="match status" value="1"/>
</dbReference>
<dbReference type="NCBIfam" id="NF001843">
    <property type="entry name" value="PRK00567.1-4"/>
    <property type="match status" value="1"/>
</dbReference>
<dbReference type="PANTHER" id="PTHR30266:SF2">
    <property type="entry name" value="LARGE-CONDUCTANCE MECHANOSENSITIVE CHANNEL"/>
    <property type="match status" value="1"/>
</dbReference>
<dbReference type="PANTHER" id="PTHR30266">
    <property type="entry name" value="MECHANOSENSITIVE CHANNEL MSCL"/>
    <property type="match status" value="1"/>
</dbReference>
<dbReference type="Pfam" id="PF01741">
    <property type="entry name" value="MscL"/>
    <property type="match status" value="1"/>
</dbReference>
<dbReference type="PRINTS" id="PR01264">
    <property type="entry name" value="MECHCHANNEL"/>
</dbReference>
<dbReference type="SUPFAM" id="SSF81330">
    <property type="entry name" value="Gated mechanosensitive channel"/>
    <property type="match status" value="1"/>
</dbReference>
<dbReference type="PROSITE" id="PS01327">
    <property type="entry name" value="MSCL"/>
    <property type="match status" value="1"/>
</dbReference>
<comment type="function">
    <text evidence="1">Channel that opens in response to stretch forces in the membrane lipid bilayer. May participate in the regulation of osmotic pressure changes within the cell.</text>
</comment>
<comment type="subunit">
    <text evidence="1">Homopentamer.</text>
</comment>
<comment type="subcellular location">
    <subcellularLocation>
        <location evidence="1">Cell inner membrane</location>
        <topology evidence="1">Multi-pass membrane protein</topology>
    </subcellularLocation>
</comment>
<comment type="similarity">
    <text evidence="1 2">Belongs to the MscL family.</text>
</comment>
<sequence>MSFIKEFREFAMRGNVVDLAVGVIIGAAFGKIVSSLVADIIMPPLGLLIGGIDFKQFAFTLREAQGDIPAVVMHYGVFIQNVFDFVIVAFAIFVAIKLINRLNRKKAEEPAAPPAPSKEEVLLGEIRDLLKEQNNRS</sequence>
<accession>P0A1X9</accession>
<accession>P39446</accession>
<accession>Q9KH32</accession>
<evidence type="ECO:0000255" key="1">
    <source>
        <dbReference type="HAMAP-Rule" id="MF_00115"/>
    </source>
</evidence>
<evidence type="ECO:0000305" key="2"/>
<feature type="chain" id="PRO_0000192458" description="Large-conductance mechanosensitive channel">
    <location>
        <begin position="1"/>
        <end position="137"/>
    </location>
</feature>
<feature type="transmembrane region" description="Helical" evidence="1">
    <location>
        <begin position="10"/>
        <end position="30"/>
    </location>
</feature>
<feature type="transmembrane region" description="Helical" evidence="1">
    <location>
        <begin position="76"/>
        <end position="96"/>
    </location>
</feature>
<proteinExistence type="inferred from homology"/>
<gene>
    <name evidence="1" type="primary">mscL</name>
    <name type="ordered locus">STY4387</name>
    <name type="ordered locus">t4094</name>
</gene>